<comment type="subcellular location">
    <subcellularLocation>
        <location evidence="3">Secreted</location>
    </subcellularLocation>
</comment>
<comment type="similarity">
    <text evidence="3">Belongs to the 'GDSL' lipolytic enzyme family.</text>
</comment>
<comment type="sequence caution" evidence="3">
    <conflict type="erroneous gene model prediction">
        <sequence resource="EMBL-CDS" id="CAB81795"/>
    </conflict>
</comment>
<keyword id="KW-0325">Glycoprotein</keyword>
<keyword id="KW-0378">Hydrolase</keyword>
<keyword id="KW-0442">Lipid degradation</keyword>
<keyword id="KW-0443">Lipid metabolism</keyword>
<keyword id="KW-1185">Reference proteome</keyword>
<keyword id="KW-0964">Secreted</keyword>
<keyword id="KW-0732">Signal</keyword>
<dbReference type="EC" id="3.1.1.-"/>
<dbReference type="EMBL" id="AL138644">
    <property type="protein sequence ID" value="CAB81795.1"/>
    <property type="status" value="ALT_SEQ"/>
    <property type="molecule type" value="Genomic_DNA"/>
</dbReference>
<dbReference type="EMBL" id="CP002686">
    <property type="protein sequence ID" value="AEE77805.1"/>
    <property type="molecule type" value="Genomic_DNA"/>
</dbReference>
<dbReference type="EMBL" id="DQ446726">
    <property type="protein sequence ID" value="ABE65987.1"/>
    <property type="molecule type" value="mRNA"/>
</dbReference>
<dbReference type="PIR" id="T47397">
    <property type="entry name" value="T47397"/>
</dbReference>
<dbReference type="RefSeq" id="NP_189941.3">
    <property type="nucleotide sequence ID" value="NM_114223.3"/>
</dbReference>
<dbReference type="SMR" id="Q3EAQ9"/>
<dbReference type="FunCoup" id="Q3EAQ9">
    <property type="interactions" value="70"/>
</dbReference>
<dbReference type="STRING" id="3702.Q3EAQ9"/>
<dbReference type="GlyGen" id="Q3EAQ9">
    <property type="glycosylation" value="1 site"/>
</dbReference>
<dbReference type="PaxDb" id="3702-AT3G43550.1"/>
<dbReference type="ProteomicsDB" id="221979"/>
<dbReference type="EnsemblPlants" id="AT3G43550.1">
    <property type="protein sequence ID" value="AT3G43550.1"/>
    <property type="gene ID" value="AT3G43550"/>
</dbReference>
<dbReference type="GeneID" id="823449"/>
<dbReference type="Gramene" id="AT3G43550.1">
    <property type="protein sequence ID" value="AT3G43550.1"/>
    <property type="gene ID" value="AT3G43550"/>
</dbReference>
<dbReference type="KEGG" id="ath:AT3G43550"/>
<dbReference type="Araport" id="AT3G43550"/>
<dbReference type="TAIR" id="AT3G43550"/>
<dbReference type="HOGENOM" id="CLU_015101_0_1_1"/>
<dbReference type="InParanoid" id="Q3EAQ9"/>
<dbReference type="PhylomeDB" id="Q3EAQ9"/>
<dbReference type="BioCyc" id="ARA:AT3G43550-MONOMER"/>
<dbReference type="PRO" id="PR:Q3EAQ9"/>
<dbReference type="Proteomes" id="UP000006548">
    <property type="component" value="Chromosome 3"/>
</dbReference>
<dbReference type="ExpressionAtlas" id="Q3EAQ9">
    <property type="expression patterns" value="baseline"/>
</dbReference>
<dbReference type="GO" id="GO:0005576">
    <property type="term" value="C:extracellular region"/>
    <property type="evidence" value="ECO:0007669"/>
    <property type="project" value="UniProtKB-SubCell"/>
</dbReference>
<dbReference type="GO" id="GO:0016298">
    <property type="term" value="F:lipase activity"/>
    <property type="evidence" value="ECO:0007669"/>
    <property type="project" value="InterPro"/>
</dbReference>
<dbReference type="GO" id="GO:0016042">
    <property type="term" value="P:lipid catabolic process"/>
    <property type="evidence" value="ECO:0007669"/>
    <property type="project" value="UniProtKB-KW"/>
</dbReference>
<dbReference type="CDD" id="cd01837">
    <property type="entry name" value="SGNH_plant_lipase_like"/>
    <property type="match status" value="1"/>
</dbReference>
<dbReference type="Gene3D" id="3.40.50.1110">
    <property type="entry name" value="SGNH hydrolase"/>
    <property type="match status" value="1"/>
</dbReference>
<dbReference type="InterPro" id="IPR001087">
    <property type="entry name" value="GDSL"/>
</dbReference>
<dbReference type="InterPro" id="IPR050592">
    <property type="entry name" value="GDSL_lipolytic_enzyme"/>
</dbReference>
<dbReference type="InterPro" id="IPR008265">
    <property type="entry name" value="Lipase_GDSL_AS"/>
</dbReference>
<dbReference type="InterPro" id="IPR036514">
    <property type="entry name" value="SGNH_hydro_sf"/>
</dbReference>
<dbReference type="InterPro" id="IPR035669">
    <property type="entry name" value="SGNH_plant_lipase-like"/>
</dbReference>
<dbReference type="PANTHER" id="PTHR45642:SF65">
    <property type="entry name" value="BNAA02G25900D PROTEIN"/>
    <property type="match status" value="1"/>
</dbReference>
<dbReference type="PANTHER" id="PTHR45642">
    <property type="entry name" value="GDSL ESTERASE/LIPASE EXL3"/>
    <property type="match status" value="1"/>
</dbReference>
<dbReference type="Pfam" id="PF00657">
    <property type="entry name" value="Lipase_GDSL"/>
    <property type="match status" value="1"/>
</dbReference>
<dbReference type="PROSITE" id="PS01098">
    <property type="entry name" value="LIPASE_GDSL_SER"/>
    <property type="match status" value="1"/>
</dbReference>
<name>GDL55_ARATH</name>
<accession>Q3EAQ9</accession>
<accession>Q1PEJ2</accession>
<accession>Q9M235</accession>
<protein>
    <recommendedName>
        <fullName>GDSL esterase/lipase At3g43550</fullName>
        <ecNumber>3.1.1.-</ecNumber>
    </recommendedName>
    <alternativeName>
        <fullName>Extracellular lipase At3g43550</fullName>
    </alternativeName>
</protein>
<gene>
    <name type="ordered locus">At3g43550</name>
    <name type="ORF">T18D12.120</name>
</gene>
<evidence type="ECO:0000250" key="1"/>
<evidence type="ECO:0000255" key="2"/>
<evidence type="ECO:0000305" key="3"/>
<organism>
    <name type="scientific">Arabidopsis thaliana</name>
    <name type="common">Mouse-ear cress</name>
    <dbReference type="NCBI Taxonomy" id="3702"/>
    <lineage>
        <taxon>Eukaryota</taxon>
        <taxon>Viridiplantae</taxon>
        <taxon>Streptophyta</taxon>
        <taxon>Embryophyta</taxon>
        <taxon>Tracheophyta</taxon>
        <taxon>Spermatophyta</taxon>
        <taxon>Magnoliopsida</taxon>
        <taxon>eudicotyledons</taxon>
        <taxon>Gunneridae</taxon>
        <taxon>Pentapetalae</taxon>
        <taxon>rosids</taxon>
        <taxon>malvids</taxon>
        <taxon>Brassicales</taxon>
        <taxon>Brassicaceae</taxon>
        <taxon>Camelineae</taxon>
        <taxon>Arabidopsis</taxon>
    </lineage>
</organism>
<sequence length="288" mass="32179">MKLQIIWLALVLIAVETYAVKQGKNVTIPALIVFGDSIMDTGNNNNLPTLLKCNFPPYGKDYPGGFATGRFSDGRVPSDLIAEKLGLVKTLPAYMNPYLKPHDLLKGVTFASGGTGYDPLTAKIMSVISVWDQLIYFKEYISKIKRHFGEEKAKDILEHSFFLVVSSSNDLAHTYLAQAHRYDRTSYANFLADSAVHFVRELHKLGARKIGVFSAVPVGCVPLQRTVFGGFFTRGCNQPLNNMAKQFNARLSPALDSLDKELDGVIIYINVYDTLFDMIQHPKKYGRF</sequence>
<reference key="1">
    <citation type="journal article" date="2000" name="Nature">
        <title>Sequence and analysis of chromosome 3 of the plant Arabidopsis thaliana.</title>
        <authorList>
            <person name="Salanoubat M."/>
            <person name="Lemcke K."/>
            <person name="Rieger M."/>
            <person name="Ansorge W."/>
            <person name="Unseld M."/>
            <person name="Fartmann B."/>
            <person name="Valle G."/>
            <person name="Bloecker H."/>
            <person name="Perez-Alonso M."/>
            <person name="Obermaier B."/>
            <person name="Delseny M."/>
            <person name="Boutry M."/>
            <person name="Grivell L.A."/>
            <person name="Mache R."/>
            <person name="Puigdomenech P."/>
            <person name="De Simone V."/>
            <person name="Choisne N."/>
            <person name="Artiguenave F."/>
            <person name="Robert C."/>
            <person name="Brottier P."/>
            <person name="Wincker P."/>
            <person name="Cattolico L."/>
            <person name="Weissenbach J."/>
            <person name="Saurin W."/>
            <person name="Quetier F."/>
            <person name="Schaefer M."/>
            <person name="Mueller-Auer S."/>
            <person name="Gabel C."/>
            <person name="Fuchs M."/>
            <person name="Benes V."/>
            <person name="Wurmbach E."/>
            <person name="Drzonek H."/>
            <person name="Erfle H."/>
            <person name="Jordan N."/>
            <person name="Bangert S."/>
            <person name="Wiedelmann R."/>
            <person name="Kranz H."/>
            <person name="Voss H."/>
            <person name="Holland R."/>
            <person name="Brandt P."/>
            <person name="Nyakatura G."/>
            <person name="Vezzi A."/>
            <person name="D'Angelo M."/>
            <person name="Pallavicini A."/>
            <person name="Toppo S."/>
            <person name="Simionati B."/>
            <person name="Conrad A."/>
            <person name="Hornischer K."/>
            <person name="Kauer G."/>
            <person name="Loehnert T.-H."/>
            <person name="Nordsiek G."/>
            <person name="Reichelt J."/>
            <person name="Scharfe M."/>
            <person name="Schoen O."/>
            <person name="Bargues M."/>
            <person name="Terol J."/>
            <person name="Climent J."/>
            <person name="Navarro P."/>
            <person name="Collado C."/>
            <person name="Perez-Perez A."/>
            <person name="Ottenwaelder B."/>
            <person name="Duchemin D."/>
            <person name="Cooke R."/>
            <person name="Laudie M."/>
            <person name="Berger-Llauro C."/>
            <person name="Purnelle B."/>
            <person name="Masuy D."/>
            <person name="de Haan M."/>
            <person name="Maarse A.C."/>
            <person name="Alcaraz J.-P."/>
            <person name="Cottet A."/>
            <person name="Casacuberta E."/>
            <person name="Monfort A."/>
            <person name="Argiriou A."/>
            <person name="Flores M."/>
            <person name="Liguori R."/>
            <person name="Vitale D."/>
            <person name="Mannhaupt G."/>
            <person name="Haase D."/>
            <person name="Schoof H."/>
            <person name="Rudd S."/>
            <person name="Zaccaria P."/>
            <person name="Mewes H.-W."/>
            <person name="Mayer K.F.X."/>
            <person name="Kaul S."/>
            <person name="Town C.D."/>
            <person name="Koo H.L."/>
            <person name="Tallon L.J."/>
            <person name="Jenkins J."/>
            <person name="Rooney T."/>
            <person name="Rizzo M."/>
            <person name="Walts A."/>
            <person name="Utterback T."/>
            <person name="Fujii C.Y."/>
            <person name="Shea T.P."/>
            <person name="Creasy T.H."/>
            <person name="Haas B."/>
            <person name="Maiti R."/>
            <person name="Wu D."/>
            <person name="Peterson J."/>
            <person name="Van Aken S."/>
            <person name="Pai G."/>
            <person name="Militscher J."/>
            <person name="Sellers P."/>
            <person name="Gill J.E."/>
            <person name="Feldblyum T.V."/>
            <person name="Preuss D."/>
            <person name="Lin X."/>
            <person name="Nierman W.C."/>
            <person name="Salzberg S.L."/>
            <person name="White O."/>
            <person name="Venter J.C."/>
            <person name="Fraser C.M."/>
            <person name="Kaneko T."/>
            <person name="Nakamura Y."/>
            <person name="Sato S."/>
            <person name="Kato T."/>
            <person name="Asamizu E."/>
            <person name="Sasamoto S."/>
            <person name="Kimura T."/>
            <person name="Idesawa K."/>
            <person name="Kawashima K."/>
            <person name="Kishida Y."/>
            <person name="Kiyokawa C."/>
            <person name="Kohara M."/>
            <person name="Matsumoto M."/>
            <person name="Matsuno A."/>
            <person name="Muraki A."/>
            <person name="Nakayama S."/>
            <person name="Nakazaki N."/>
            <person name="Shinpo S."/>
            <person name="Takeuchi C."/>
            <person name="Wada T."/>
            <person name="Watanabe A."/>
            <person name="Yamada M."/>
            <person name="Yasuda M."/>
            <person name="Tabata S."/>
        </authorList>
    </citation>
    <scope>NUCLEOTIDE SEQUENCE [LARGE SCALE GENOMIC DNA]</scope>
    <source>
        <strain>cv. Columbia</strain>
    </source>
</reference>
<reference key="2">
    <citation type="journal article" date="2017" name="Plant J.">
        <title>Araport11: a complete reannotation of the Arabidopsis thaliana reference genome.</title>
        <authorList>
            <person name="Cheng C.Y."/>
            <person name="Krishnakumar V."/>
            <person name="Chan A.P."/>
            <person name="Thibaud-Nissen F."/>
            <person name="Schobel S."/>
            <person name="Town C.D."/>
        </authorList>
    </citation>
    <scope>GENOME REANNOTATION</scope>
    <source>
        <strain>cv. Columbia</strain>
    </source>
</reference>
<reference key="3">
    <citation type="journal article" date="2006" name="Plant Biotechnol. J.">
        <title>Simultaneous high-throughput recombinational cloning of open reading frames in closed and open configurations.</title>
        <authorList>
            <person name="Underwood B.A."/>
            <person name="Vanderhaeghen R."/>
            <person name="Whitford R."/>
            <person name="Town C.D."/>
            <person name="Hilson P."/>
        </authorList>
    </citation>
    <scope>NUCLEOTIDE SEQUENCE [LARGE SCALE MRNA]</scope>
    <source>
        <strain>cv. Columbia</strain>
    </source>
</reference>
<reference key="4">
    <citation type="journal article" date="2004" name="Prog. Lipid Res.">
        <title>GDSL family of serine esterases/lipases.</title>
        <authorList>
            <person name="Akoh C.C."/>
            <person name="Lee G.-C."/>
            <person name="Liaw Y.-C."/>
            <person name="Huang T.-H."/>
            <person name="Shaw J.-F."/>
        </authorList>
    </citation>
    <scope>REVIEW</scope>
</reference>
<reference key="5">
    <citation type="journal article" date="2008" name="Pak. J. Biol. Sci.">
        <title>Sequence analysis of GDSL lipase gene family in Arabidopsis thaliana.</title>
        <authorList>
            <person name="Ling H."/>
        </authorList>
    </citation>
    <scope>GENE FAMILY</scope>
</reference>
<proteinExistence type="evidence at transcript level"/>
<feature type="signal peptide" evidence="2">
    <location>
        <begin position="1"/>
        <end position="19"/>
    </location>
</feature>
<feature type="chain" id="PRO_0000367396" description="GDSL esterase/lipase At3g43550">
    <location>
        <begin position="20"/>
        <end position="288"/>
    </location>
</feature>
<feature type="active site" description="Nucleophile" evidence="1">
    <location>
        <position position="37"/>
    </location>
</feature>
<feature type="glycosylation site" description="N-linked (GlcNAc...) asparagine" evidence="2">
    <location>
        <position position="25"/>
    </location>
</feature>